<sequence>MAHKKAAGSSRNGRDSNPKMLGVKIFGGQAIVAGNIIVRQRGTEFHAGEGVGMGRDHTLFALNDGVVKFATKGKFNRRYVMVESA</sequence>
<dbReference type="EMBL" id="CP000082">
    <property type="protein sequence ID" value="AAZ19420.1"/>
    <property type="molecule type" value="Genomic_DNA"/>
</dbReference>
<dbReference type="RefSeq" id="WP_010199200.1">
    <property type="nucleotide sequence ID" value="NC_007204.1"/>
</dbReference>
<dbReference type="SMR" id="Q4FRD8"/>
<dbReference type="STRING" id="259536.Psyc_1572"/>
<dbReference type="KEGG" id="par:Psyc_1572"/>
<dbReference type="eggNOG" id="COG0211">
    <property type="taxonomic scope" value="Bacteria"/>
</dbReference>
<dbReference type="HOGENOM" id="CLU_095424_4_1_6"/>
<dbReference type="OrthoDB" id="9803474at2"/>
<dbReference type="Proteomes" id="UP000000546">
    <property type="component" value="Chromosome"/>
</dbReference>
<dbReference type="GO" id="GO:0022625">
    <property type="term" value="C:cytosolic large ribosomal subunit"/>
    <property type="evidence" value="ECO:0007669"/>
    <property type="project" value="TreeGrafter"/>
</dbReference>
<dbReference type="GO" id="GO:0003735">
    <property type="term" value="F:structural constituent of ribosome"/>
    <property type="evidence" value="ECO:0007669"/>
    <property type="project" value="InterPro"/>
</dbReference>
<dbReference type="GO" id="GO:0006412">
    <property type="term" value="P:translation"/>
    <property type="evidence" value="ECO:0007669"/>
    <property type="project" value="UniProtKB-UniRule"/>
</dbReference>
<dbReference type="FunFam" id="2.40.50.100:FF:000020">
    <property type="entry name" value="50S ribosomal protein L27"/>
    <property type="match status" value="1"/>
</dbReference>
<dbReference type="Gene3D" id="2.40.50.100">
    <property type="match status" value="1"/>
</dbReference>
<dbReference type="HAMAP" id="MF_00539">
    <property type="entry name" value="Ribosomal_bL27"/>
    <property type="match status" value="1"/>
</dbReference>
<dbReference type="InterPro" id="IPR001684">
    <property type="entry name" value="Ribosomal_bL27"/>
</dbReference>
<dbReference type="InterPro" id="IPR018261">
    <property type="entry name" value="Ribosomal_bL27_CS"/>
</dbReference>
<dbReference type="NCBIfam" id="TIGR00062">
    <property type="entry name" value="L27"/>
    <property type="match status" value="1"/>
</dbReference>
<dbReference type="PANTHER" id="PTHR15893:SF0">
    <property type="entry name" value="LARGE RIBOSOMAL SUBUNIT PROTEIN BL27M"/>
    <property type="match status" value="1"/>
</dbReference>
<dbReference type="PANTHER" id="PTHR15893">
    <property type="entry name" value="RIBOSOMAL PROTEIN L27"/>
    <property type="match status" value="1"/>
</dbReference>
<dbReference type="Pfam" id="PF01016">
    <property type="entry name" value="Ribosomal_L27"/>
    <property type="match status" value="1"/>
</dbReference>
<dbReference type="PRINTS" id="PR00063">
    <property type="entry name" value="RIBOSOMALL27"/>
</dbReference>
<dbReference type="SUPFAM" id="SSF110324">
    <property type="entry name" value="Ribosomal L27 protein-like"/>
    <property type="match status" value="1"/>
</dbReference>
<dbReference type="PROSITE" id="PS00831">
    <property type="entry name" value="RIBOSOMAL_L27"/>
    <property type="match status" value="1"/>
</dbReference>
<comment type="similarity">
    <text evidence="1">Belongs to the bacterial ribosomal protein bL27 family.</text>
</comment>
<gene>
    <name evidence="1" type="primary">rpmA</name>
    <name type="ordered locus">Psyc_1572</name>
</gene>
<accession>Q4FRD8</accession>
<proteinExistence type="inferred from homology"/>
<keyword id="KW-1185">Reference proteome</keyword>
<keyword id="KW-0687">Ribonucleoprotein</keyword>
<keyword id="KW-0689">Ribosomal protein</keyword>
<evidence type="ECO:0000255" key="1">
    <source>
        <dbReference type="HAMAP-Rule" id="MF_00539"/>
    </source>
</evidence>
<evidence type="ECO:0000256" key="2">
    <source>
        <dbReference type="SAM" id="MobiDB-lite"/>
    </source>
</evidence>
<evidence type="ECO:0000305" key="3"/>
<protein>
    <recommendedName>
        <fullName evidence="1">Large ribosomal subunit protein bL27</fullName>
    </recommendedName>
    <alternativeName>
        <fullName evidence="3">50S ribosomal protein L27</fullName>
    </alternativeName>
</protein>
<name>RL27_PSYA2</name>
<reference key="1">
    <citation type="journal article" date="2010" name="Appl. Environ. Microbiol.">
        <title>The genome sequence of Psychrobacter arcticus 273-4, a psychroactive Siberian permafrost bacterium, reveals mechanisms for adaptation to low-temperature growth.</title>
        <authorList>
            <person name="Ayala-del-Rio H.L."/>
            <person name="Chain P.S."/>
            <person name="Grzymski J.J."/>
            <person name="Ponder M.A."/>
            <person name="Ivanova N."/>
            <person name="Bergholz P.W."/>
            <person name="Di Bartolo G."/>
            <person name="Hauser L."/>
            <person name="Land M."/>
            <person name="Bakermans C."/>
            <person name="Rodrigues D."/>
            <person name="Klappenbach J."/>
            <person name="Zarka D."/>
            <person name="Larimer F."/>
            <person name="Richardson P."/>
            <person name="Murray A."/>
            <person name="Thomashow M."/>
            <person name="Tiedje J.M."/>
        </authorList>
    </citation>
    <scope>NUCLEOTIDE SEQUENCE [LARGE SCALE GENOMIC DNA]</scope>
    <source>
        <strain>DSM 17307 / VKM B-2377 / 273-4</strain>
    </source>
</reference>
<feature type="chain" id="PRO_1000017567" description="Large ribosomal subunit protein bL27">
    <location>
        <begin position="1"/>
        <end position="85"/>
    </location>
</feature>
<feature type="region of interest" description="Disordered" evidence="2">
    <location>
        <begin position="1"/>
        <end position="20"/>
    </location>
</feature>
<organism>
    <name type="scientific">Psychrobacter arcticus (strain DSM 17307 / VKM B-2377 / 273-4)</name>
    <dbReference type="NCBI Taxonomy" id="259536"/>
    <lineage>
        <taxon>Bacteria</taxon>
        <taxon>Pseudomonadati</taxon>
        <taxon>Pseudomonadota</taxon>
        <taxon>Gammaproteobacteria</taxon>
        <taxon>Moraxellales</taxon>
        <taxon>Moraxellaceae</taxon>
        <taxon>Psychrobacter</taxon>
    </lineage>
</organism>